<comment type="function">
    <text evidence="1">Serine/threonine protein phosphatase that may dephosphorylate and activate lipin-like phosphatases. Lipins are phosphatidate phosphatases that catalyze the conversion of phosphatidic acid to diacylglycerol and control the metabolism of fatty acids at different levels. May indirectly modulate the lipid composition of nuclear and/or endoplasmic reticulum membranes and be required for proper nuclear membrane morphology and/or dynamics. May also indirectly regulate the production of lipid droplets and triacylglycerol (By similarity).</text>
</comment>
<comment type="catalytic activity">
    <reaction>
        <text>O-phospho-L-seryl-[protein] + H2O = L-seryl-[protein] + phosphate</text>
        <dbReference type="Rhea" id="RHEA:20629"/>
        <dbReference type="Rhea" id="RHEA-COMP:9863"/>
        <dbReference type="Rhea" id="RHEA-COMP:11604"/>
        <dbReference type="ChEBI" id="CHEBI:15377"/>
        <dbReference type="ChEBI" id="CHEBI:29999"/>
        <dbReference type="ChEBI" id="CHEBI:43474"/>
        <dbReference type="ChEBI" id="CHEBI:83421"/>
        <dbReference type="EC" id="3.1.3.16"/>
    </reaction>
</comment>
<comment type="catalytic activity">
    <reaction>
        <text>O-phospho-L-threonyl-[protein] + H2O = L-threonyl-[protein] + phosphate</text>
        <dbReference type="Rhea" id="RHEA:47004"/>
        <dbReference type="Rhea" id="RHEA-COMP:11060"/>
        <dbReference type="Rhea" id="RHEA-COMP:11605"/>
        <dbReference type="ChEBI" id="CHEBI:15377"/>
        <dbReference type="ChEBI" id="CHEBI:30013"/>
        <dbReference type="ChEBI" id="CHEBI:43474"/>
        <dbReference type="ChEBI" id="CHEBI:61977"/>
        <dbReference type="EC" id="3.1.3.16"/>
    </reaction>
</comment>
<comment type="subcellular location">
    <subcellularLocation>
        <location evidence="4">Membrane</location>
        <topology evidence="4">Single-pass membrane protein</topology>
    </subcellularLocation>
</comment>
<comment type="similarity">
    <text evidence="4">Belongs to the dullard family.</text>
</comment>
<name>CNEP1_DROPS</name>
<keyword id="KW-0378">Hydrolase</keyword>
<keyword id="KW-0472">Membrane</keyword>
<keyword id="KW-0904">Protein phosphatase</keyword>
<keyword id="KW-1185">Reference proteome</keyword>
<keyword id="KW-0812">Transmembrane</keyword>
<keyword id="KW-1133">Transmembrane helix</keyword>
<dbReference type="EC" id="3.1.3.16"/>
<dbReference type="EMBL" id="CH379063">
    <property type="protein sequence ID" value="EAL32790.1"/>
    <property type="molecule type" value="Genomic_DNA"/>
</dbReference>
<dbReference type="SMR" id="Q29I63"/>
<dbReference type="FunCoup" id="Q29I63">
    <property type="interactions" value="2369"/>
</dbReference>
<dbReference type="STRING" id="46245.Q29I63"/>
<dbReference type="EnsemblMetazoa" id="FBtr0275234">
    <property type="protein sequence ID" value="FBpp0273672"/>
    <property type="gene ID" value="FBgn0074267"/>
</dbReference>
<dbReference type="GeneID" id="4815779"/>
<dbReference type="KEGG" id="dpo:4815779"/>
<dbReference type="CTD" id="33107"/>
<dbReference type="eggNOG" id="KOG1605">
    <property type="taxonomic scope" value="Eukaryota"/>
</dbReference>
<dbReference type="HOGENOM" id="CLU_020262_4_3_1"/>
<dbReference type="InParanoid" id="Q29I63"/>
<dbReference type="OMA" id="RIWGFFM"/>
<dbReference type="PhylomeDB" id="Q29I63"/>
<dbReference type="Proteomes" id="UP000001819">
    <property type="component" value="Chromosome X"/>
</dbReference>
<dbReference type="Bgee" id="FBgn0074267">
    <property type="expression patterns" value="Expressed in female reproductive system and 2 other cell types or tissues"/>
</dbReference>
<dbReference type="GO" id="GO:0005737">
    <property type="term" value="C:cytoplasm"/>
    <property type="evidence" value="ECO:0000250"/>
    <property type="project" value="UniProtKB"/>
</dbReference>
<dbReference type="GO" id="GO:0005789">
    <property type="term" value="C:endoplasmic reticulum membrane"/>
    <property type="evidence" value="ECO:0000250"/>
    <property type="project" value="UniProtKB"/>
</dbReference>
<dbReference type="GO" id="GO:0071595">
    <property type="term" value="C:Nem1-Spo7 phosphatase complex"/>
    <property type="evidence" value="ECO:0000250"/>
    <property type="project" value="UniProtKB"/>
</dbReference>
<dbReference type="GO" id="GO:0005635">
    <property type="term" value="C:nuclear envelope"/>
    <property type="evidence" value="ECO:0000250"/>
    <property type="project" value="UniProtKB"/>
</dbReference>
<dbReference type="GO" id="GO:0031965">
    <property type="term" value="C:nuclear membrane"/>
    <property type="evidence" value="ECO:0000250"/>
    <property type="project" value="UniProtKB"/>
</dbReference>
<dbReference type="GO" id="GO:0004721">
    <property type="term" value="F:phosphoprotein phosphatase activity"/>
    <property type="evidence" value="ECO:0000250"/>
    <property type="project" value="UniProtKB"/>
</dbReference>
<dbReference type="GO" id="GO:0004722">
    <property type="term" value="F:protein serine/threonine phosphatase activity"/>
    <property type="evidence" value="ECO:0000250"/>
    <property type="project" value="UniProtKB"/>
</dbReference>
<dbReference type="GO" id="GO:0006998">
    <property type="term" value="P:nuclear envelope organization"/>
    <property type="evidence" value="ECO:0000250"/>
    <property type="project" value="UniProtKB"/>
</dbReference>
<dbReference type="GO" id="GO:0010867">
    <property type="term" value="P:positive regulation of triglyceride biosynthetic process"/>
    <property type="evidence" value="ECO:0000250"/>
    <property type="project" value="UniProtKB"/>
</dbReference>
<dbReference type="CDD" id="cd07521">
    <property type="entry name" value="HAD_FCP1-like"/>
    <property type="match status" value="1"/>
</dbReference>
<dbReference type="FunFam" id="3.40.50.1000:FF:000044">
    <property type="entry name" value="CTD nuclear envelope phosphatase 1"/>
    <property type="match status" value="1"/>
</dbReference>
<dbReference type="Gene3D" id="3.40.50.1000">
    <property type="entry name" value="HAD superfamily/HAD-like"/>
    <property type="match status" value="1"/>
</dbReference>
<dbReference type="InterPro" id="IPR011948">
    <property type="entry name" value="Dullard_phosphatase"/>
</dbReference>
<dbReference type="InterPro" id="IPR004274">
    <property type="entry name" value="FCP1_dom"/>
</dbReference>
<dbReference type="InterPro" id="IPR036412">
    <property type="entry name" value="HAD-like_sf"/>
</dbReference>
<dbReference type="InterPro" id="IPR023214">
    <property type="entry name" value="HAD_sf"/>
</dbReference>
<dbReference type="InterPro" id="IPR050365">
    <property type="entry name" value="TIM50"/>
</dbReference>
<dbReference type="NCBIfam" id="TIGR02251">
    <property type="entry name" value="HIF-SF_euk"/>
    <property type="match status" value="1"/>
</dbReference>
<dbReference type="PANTHER" id="PTHR12210">
    <property type="entry name" value="DULLARD PROTEIN PHOSPHATASE"/>
    <property type="match status" value="1"/>
</dbReference>
<dbReference type="Pfam" id="PF03031">
    <property type="entry name" value="NIF"/>
    <property type="match status" value="1"/>
</dbReference>
<dbReference type="SMART" id="SM00577">
    <property type="entry name" value="CPDc"/>
    <property type="match status" value="1"/>
</dbReference>
<dbReference type="SUPFAM" id="SSF56784">
    <property type="entry name" value="HAD-like"/>
    <property type="match status" value="1"/>
</dbReference>
<dbReference type="PROSITE" id="PS50969">
    <property type="entry name" value="FCP1"/>
    <property type="match status" value="1"/>
</dbReference>
<sequence length="243" mass="28467">MISLLQMKFHALLLLLSKVWTCICFMFNRQVRAFIQYQPVKYELFPLSPVSRHRLSLVQRKTLVLDLDETLIHSHHNAMPRNTVKPGTPHDFTVKVTIDRNPVRFFVHKRPHVDYFLDVVSQWYDLVVFTASMEIYGAAVADKLDNGRNILRRRYYRQHCTPDYGSYTKDLSAICSDLNRIFIIDNSPGAYRCFPNNAIPIKSWFSDPMDTALLSLLPMLDALRFTNDVRSVLSRNLHLHRLW</sequence>
<accession>Q29I63</accession>
<feature type="chain" id="PRO_0000297977" description="CTD nuclear envelope phosphatase 1 homolog">
    <location>
        <begin position="1"/>
        <end position="243"/>
    </location>
</feature>
<feature type="transmembrane region" description="Helical" evidence="2">
    <location>
        <begin position="11"/>
        <end position="27"/>
    </location>
</feature>
<feature type="domain" description="FCP1 homology" evidence="3">
    <location>
        <begin position="56"/>
        <end position="223"/>
    </location>
</feature>
<gene>
    <name type="primary">l(1)G0269</name>
    <name type="ORF">GA14238</name>
</gene>
<evidence type="ECO:0000250" key="1"/>
<evidence type="ECO:0000255" key="2"/>
<evidence type="ECO:0000255" key="3">
    <source>
        <dbReference type="PROSITE-ProRule" id="PRU00336"/>
    </source>
</evidence>
<evidence type="ECO:0000305" key="4"/>
<protein>
    <recommendedName>
        <fullName>CTD nuclear envelope phosphatase 1 homolog</fullName>
        <ecNumber>3.1.3.16</ecNumber>
    </recommendedName>
    <alternativeName>
        <fullName>Serine/threonine-protein phosphatase dullard homolog</fullName>
    </alternativeName>
</protein>
<organism>
    <name type="scientific">Drosophila pseudoobscura pseudoobscura</name>
    <name type="common">Fruit fly</name>
    <dbReference type="NCBI Taxonomy" id="46245"/>
    <lineage>
        <taxon>Eukaryota</taxon>
        <taxon>Metazoa</taxon>
        <taxon>Ecdysozoa</taxon>
        <taxon>Arthropoda</taxon>
        <taxon>Hexapoda</taxon>
        <taxon>Insecta</taxon>
        <taxon>Pterygota</taxon>
        <taxon>Neoptera</taxon>
        <taxon>Endopterygota</taxon>
        <taxon>Diptera</taxon>
        <taxon>Brachycera</taxon>
        <taxon>Muscomorpha</taxon>
        <taxon>Ephydroidea</taxon>
        <taxon>Drosophilidae</taxon>
        <taxon>Drosophila</taxon>
        <taxon>Sophophora</taxon>
    </lineage>
</organism>
<reference key="1">
    <citation type="journal article" date="2005" name="Genome Res.">
        <title>Comparative genome sequencing of Drosophila pseudoobscura: chromosomal, gene, and cis-element evolution.</title>
        <authorList>
            <person name="Richards S."/>
            <person name="Liu Y."/>
            <person name="Bettencourt B.R."/>
            <person name="Hradecky P."/>
            <person name="Letovsky S."/>
            <person name="Nielsen R."/>
            <person name="Thornton K."/>
            <person name="Hubisz M.J."/>
            <person name="Chen R."/>
            <person name="Meisel R.P."/>
            <person name="Couronne O."/>
            <person name="Hua S."/>
            <person name="Smith M.A."/>
            <person name="Zhang P."/>
            <person name="Liu J."/>
            <person name="Bussemaker H.J."/>
            <person name="van Batenburg M.F."/>
            <person name="Howells S.L."/>
            <person name="Scherer S.E."/>
            <person name="Sodergren E."/>
            <person name="Matthews B.B."/>
            <person name="Crosby M.A."/>
            <person name="Schroeder A.J."/>
            <person name="Ortiz-Barrientos D."/>
            <person name="Rives C.M."/>
            <person name="Metzker M.L."/>
            <person name="Muzny D.M."/>
            <person name="Scott G."/>
            <person name="Steffen D."/>
            <person name="Wheeler D.A."/>
            <person name="Worley K.C."/>
            <person name="Havlak P."/>
            <person name="Durbin K.J."/>
            <person name="Egan A."/>
            <person name="Gill R."/>
            <person name="Hume J."/>
            <person name="Morgan M.B."/>
            <person name="Miner G."/>
            <person name="Hamilton C."/>
            <person name="Huang Y."/>
            <person name="Waldron L."/>
            <person name="Verduzco D."/>
            <person name="Clerc-Blankenburg K.P."/>
            <person name="Dubchak I."/>
            <person name="Noor M.A.F."/>
            <person name="Anderson W."/>
            <person name="White K.P."/>
            <person name="Clark A.G."/>
            <person name="Schaeffer S.W."/>
            <person name="Gelbart W.M."/>
            <person name="Weinstock G.M."/>
            <person name="Gibbs R.A."/>
        </authorList>
    </citation>
    <scope>NUCLEOTIDE SEQUENCE [LARGE SCALE GENOMIC DNA]</scope>
    <source>
        <strain>MV2-25 / Tucson 14011-0121.94</strain>
    </source>
</reference>
<proteinExistence type="inferred from homology"/>